<evidence type="ECO:0000255" key="1">
    <source>
        <dbReference type="HAMAP-Rule" id="MF_00819"/>
    </source>
</evidence>
<evidence type="ECO:0000305" key="2"/>
<sequence length="97" mass="10934">MEVTDVRLRRVNTEGRMRAIASITLDHEFVVHDIRVIDGNNGLFVAMPSKRTPDGEFRDIAHPINSGTRSKIQDAVLTEYHRLGELEEVEFEEAGAS</sequence>
<accession>Q63HI5</accession>
<feature type="chain" id="PRO_0000157183" description="Putative septation protein SpoVG">
    <location>
        <begin position="1"/>
        <end position="97"/>
    </location>
</feature>
<keyword id="KW-0131">Cell cycle</keyword>
<keyword id="KW-0132">Cell division</keyword>
<keyword id="KW-0717">Septation</keyword>
<keyword id="KW-0749">Sporulation</keyword>
<reference key="1">
    <citation type="journal article" date="2006" name="J. Bacteriol.">
        <title>Pathogenomic sequence analysis of Bacillus cereus and Bacillus thuringiensis isolates closely related to Bacillus anthracis.</title>
        <authorList>
            <person name="Han C.S."/>
            <person name="Xie G."/>
            <person name="Challacombe J.F."/>
            <person name="Altherr M.R."/>
            <person name="Bhotika S.S."/>
            <person name="Bruce D."/>
            <person name="Campbell C.S."/>
            <person name="Campbell M.L."/>
            <person name="Chen J."/>
            <person name="Chertkov O."/>
            <person name="Cleland C."/>
            <person name="Dimitrijevic M."/>
            <person name="Doggett N.A."/>
            <person name="Fawcett J.J."/>
            <person name="Glavina T."/>
            <person name="Goodwin L.A."/>
            <person name="Hill K.K."/>
            <person name="Hitchcock P."/>
            <person name="Jackson P.J."/>
            <person name="Keim P."/>
            <person name="Kewalramani A.R."/>
            <person name="Longmire J."/>
            <person name="Lucas S."/>
            <person name="Malfatti S."/>
            <person name="McMurry K."/>
            <person name="Meincke L.J."/>
            <person name="Misra M."/>
            <person name="Moseman B.L."/>
            <person name="Mundt M."/>
            <person name="Munk A.C."/>
            <person name="Okinaka R.T."/>
            <person name="Parson-Quintana B."/>
            <person name="Reilly L.P."/>
            <person name="Richardson P."/>
            <person name="Robinson D.L."/>
            <person name="Rubin E."/>
            <person name="Saunders E."/>
            <person name="Tapia R."/>
            <person name="Tesmer J.G."/>
            <person name="Thayer N."/>
            <person name="Thompson L.S."/>
            <person name="Tice H."/>
            <person name="Ticknor L.O."/>
            <person name="Wills P.L."/>
            <person name="Brettin T.S."/>
            <person name="Gilna P."/>
        </authorList>
    </citation>
    <scope>NUCLEOTIDE SEQUENCE [LARGE SCALE GENOMIC DNA]</scope>
    <source>
        <strain>ZK / E33L</strain>
    </source>
</reference>
<dbReference type="EMBL" id="CP000001">
    <property type="protein sequence ID" value="AAU20187.1"/>
    <property type="status" value="ALT_INIT"/>
    <property type="molecule type" value="Genomic_DNA"/>
</dbReference>
<dbReference type="RefSeq" id="WP_000454041.1">
    <property type="nucleotide sequence ID" value="NZ_CP009968.1"/>
</dbReference>
<dbReference type="SMR" id="Q63HI5"/>
<dbReference type="GeneID" id="93011022"/>
<dbReference type="KEGG" id="bcz:BCE33L0043"/>
<dbReference type="PATRIC" id="fig|288681.22.peg.110"/>
<dbReference type="Proteomes" id="UP000002612">
    <property type="component" value="Chromosome"/>
</dbReference>
<dbReference type="GO" id="GO:0030436">
    <property type="term" value="P:asexual sporulation"/>
    <property type="evidence" value="ECO:0007669"/>
    <property type="project" value="UniProtKB-UniRule"/>
</dbReference>
<dbReference type="GO" id="GO:0000917">
    <property type="term" value="P:division septum assembly"/>
    <property type="evidence" value="ECO:0007669"/>
    <property type="project" value="UniProtKB-KW"/>
</dbReference>
<dbReference type="GO" id="GO:0030435">
    <property type="term" value="P:sporulation resulting in formation of a cellular spore"/>
    <property type="evidence" value="ECO:0007669"/>
    <property type="project" value="UniProtKB-KW"/>
</dbReference>
<dbReference type="FunFam" id="3.30.1120.40:FF:000001">
    <property type="entry name" value="Putative septation protein SpoVG"/>
    <property type="match status" value="1"/>
</dbReference>
<dbReference type="Gene3D" id="3.30.1120.40">
    <property type="entry name" value="Stage V sporulation protein G"/>
    <property type="match status" value="1"/>
</dbReference>
<dbReference type="HAMAP" id="MF_00819">
    <property type="entry name" value="SpoVG"/>
    <property type="match status" value="1"/>
</dbReference>
<dbReference type="InterPro" id="IPR007170">
    <property type="entry name" value="SpoVG"/>
</dbReference>
<dbReference type="InterPro" id="IPR036751">
    <property type="entry name" value="SpoVG_sf"/>
</dbReference>
<dbReference type="NCBIfam" id="NF009749">
    <property type="entry name" value="PRK13259.1"/>
    <property type="match status" value="1"/>
</dbReference>
<dbReference type="PANTHER" id="PTHR38429">
    <property type="entry name" value="SEPTATION PROTEIN SPOVG-RELATED"/>
    <property type="match status" value="1"/>
</dbReference>
<dbReference type="PANTHER" id="PTHR38429:SF1">
    <property type="entry name" value="SEPTATION PROTEIN SPOVG-RELATED"/>
    <property type="match status" value="1"/>
</dbReference>
<dbReference type="Pfam" id="PF04026">
    <property type="entry name" value="SpoVG"/>
    <property type="match status" value="1"/>
</dbReference>
<dbReference type="SUPFAM" id="SSF160537">
    <property type="entry name" value="SpoVG-like"/>
    <property type="match status" value="1"/>
</dbReference>
<organism>
    <name type="scientific">Bacillus cereus (strain ZK / E33L)</name>
    <dbReference type="NCBI Taxonomy" id="288681"/>
    <lineage>
        <taxon>Bacteria</taxon>
        <taxon>Bacillati</taxon>
        <taxon>Bacillota</taxon>
        <taxon>Bacilli</taxon>
        <taxon>Bacillales</taxon>
        <taxon>Bacillaceae</taxon>
        <taxon>Bacillus</taxon>
        <taxon>Bacillus cereus group</taxon>
    </lineage>
</organism>
<protein>
    <recommendedName>
        <fullName evidence="1">Putative septation protein SpoVG</fullName>
    </recommendedName>
    <alternativeName>
        <fullName evidence="1">Stage V sporulation protein G</fullName>
    </alternativeName>
</protein>
<name>SP5G_BACCZ</name>
<gene>
    <name evidence="1" type="primary">spoVG</name>
    <name type="ordered locus">BCE33L0043</name>
</gene>
<proteinExistence type="inferred from homology"/>
<comment type="function">
    <text evidence="1">Essential for sporulation. Interferes with or is a negative regulator of the pathway leading to asymmetric septation.</text>
</comment>
<comment type="similarity">
    <text evidence="1">Belongs to the SpoVG family.</text>
</comment>
<comment type="sequence caution" evidence="2">
    <conflict type="erroneous initiation">
        <sequence resource="EMBL-CDS" id="AAU20187"/>
    </conflict>
</comment>